<sequence>MTTAHRPTFDPARGKEALRGPAYHQRLLPAYTHLKVRQSGQGTEGEAARRDLRAELLQAEAAHFAKKNGAPVPEASAESTPKRQLEGAPANGGDGELEEDPEAKRRRILEETREIDADSEASEEDSSEDESDDEDEAAELMRELEKIKKERLAQKEKEERERAAKEEEQREVDIARGNPLLNPSDFNIKRRWDDDVVFKNQARGTEDKRGKEFVNDLLRSDFHKKFMSKYVR</sequence>
<name>CWC15_EMENI</name>
<evidence type="ECO:0000250" key="1"/>
<evidence type="ECO:0000255" key="2"/>
<evidence type="ECO:0000256" key="3">
    <source>
        <dbReference type="SAM" id="MobiDB-lite"/>
    </source>
</evidence>
<evidence type="ECO:0000305" key="4"/>
<comment type="function">
    <text evidence="1">Involved in pre-mRNA splicing.</text>
</comment>
<comment type="subunit">
    <text evidence="1">Associated with the spliceosome.</text>
</comment>
<comment type="subcellular location">
    <subcellularLocation>
        <location evidence="4">Nucleus</location>
    </subcellularLocation>
</comment>
<comment type="similarity">
    <text evidence="4">Belongs to the CWC15 family.</text>
</comment>
<gene>
    <name type="primary">cwc15</name>
    <name type="ORF">AN6110</name>
</gene>
<organism>
    <name type="scientific">Emericella nidulans (strain FGSC A4 / ATCC 38163 / CBS 112.46 / NRRL 194 / M139)</name>
    <name type="common">Aspergillus nidulans</name>
    <dbReference type="NCBI Taxonomy" id="227321"/>
    <lineage>
        <taxon>Eukaryota</taxon>
        <taxon>Fungi</taxon>
        <taxon>Dikarya</taxon>
        <taxon>Ascomycota</taxon>
        <taxon>Pezizomycotina</taxon>
        <taxon>Eurotiomycetes</taxon>
        <taxon>Eurotiomycetidae</taxon>
        <taxon>Eurotiales</taxon>
        <taxon>Aspergillaceae</taxon>
        <taxon>Aspergillus</taxon>
        <taxon>Aspergillus subgen. Nidulantes</taxon>
    </lineage>
</organism>
<feature type="chain" id="PRO_0000218240" description="Pre-mRNA-splicing factor cwc15">
    <location>
        <begin position="1"/>
        <end position="232"/>
    </location>
</feature>
<feature type="region of interest" description="Disordered" evidence="3">
    <location>
        <begin position="1"/>
        <end position="21"/>
    </location>
</feature>
<feature type="region of interest" description="Disordered" evidence="3">
    <location>
        <begin position="63"/>
        <end position="186"/>
    </location>
</feature>
<feature type="coiled-coil region" evidence="2">
    <location>
        <begin position="124"/>
        <end position="176"/>
    </location>
</feature>
<feature type="compositionally biased region" description="Acidic residues" evidence="3">
    <location>
        <begin position="117"/>
        <end position="138"/>
    </location>
</feature>
<feature type="compositionally biased region" description="Basic and acidic residues" evidence="3">
    <location>
        <begin position="139"/>
        <end position="174"/>
    </location>
</feature>
<dbReference type="EMBL" id="AACD01000104">
    <property type="protein sequence ID" value="EAA58085.1"/>
    <property type="molecule type" value="Genomic_DNA"/>
</dbReference>
<dbReference type="EMBL" id="BN001301">
    <property type="protein sequence ID" value="CBF70164.1"/>
    <property type="molecule type" value="Genomic_DNA"/>
</dbReference>
<dbReference type="RefSeq" id="XP_663714.1">
    <property type="nucleotide sequence ID" value="XM_658622.1"/>
</dbReference>
<dbReference type="SMR" id="Q5B020"/>
<dbReference type="STRING" id="227321.Q5B020"/>
<dbReference type="EnsemblFungi" id="CBF70164">
    <property type="protein sequence ID" value="CBF70164"/>
    <property type="gene ID" value="ANIA_06110"/>
</dbReference>
<dbReference type="KEGG" id="ani:ANIA_06110"/>
<dbReference type="VEuPathDB" id="FungiDB:AN6110"/>
<dbReference type="eggNOG" id="KOG3228">
    <property type="taxonomic scope" value="Eukaryota"/>
</dbReference>
<dbReference type="HOGENOM" id="CLU_068312_0_1_1"/>
<dbReference type="InParanoid" id="Q5B020"/>
<dbReference type="OMA" id="KYREHGQ"/>
<dbReference type="OrthoDB" id="30179at2759"/>
<dbReference type="Proteomes" id="UP000000560">
    <property type="component" value="Chromosome I"/>
</dbReference>
<dbReference type="GO" id="GO:0071013">
    <property type="term" value="C:catalytic step 2 spliceosome"/>
    <property type="evidence" value="ECO:0000318"/>
    <property type="project" value="GO_Central"/>
</dbReference>
<dbReference type="GO" id="GO:0005634">
    <property type="term" value="C:nucleus"/>
    <property type="evidence" value="ECO:0000250"/>
    <property type="project" value="UniProtKB"/>
</dbReference>
<dbReference type="GO" id="GO:0071014">
    <property type="term" value="C:post-mRNA release spliceosomal complex"/>
    <property type="evidence" value="ECO:0007669"/>
    <property type="project" value="EnsemblFungi"/>
</dbReference>
<dbReference type="GO" id="GO:0000974">
    <property type="term" value="C:Prp19 complex"/>
    <property type="evidence" value="ECO:0007669"/>
    <property type="project" value="EnsemblFungi"/>
</dbReference>
<dbReference type="GO" id="GO:0003723">
    <property type="term" value="F:RNA binding"/>
    <property type="evidence" value="ECO:0000250"/>
    <property type="project" value="UniProtKB"/>
</dbReference>
<dbReference type="GO" id="GO:0045292">
    <property type="term" value="P:mRNA cis splicing, via spliceosome"/>
    <property type="evidence" value="ECO:0000318"/>
    <property type="project" value="GO_Central"/>
</dbReference>
<dbReference type="GO" id="GO:0000398">
    <property type="term" value="P:mRNA splicing, via spliceosome"/>
    <property type="evidence" value="ECO:0000250"/>
    <property type="project" value="UniProtKB"/>
</dbReference>
<dbReference type="InterPro" id="IPR006973">
    <property type="entry name" value="Cwf_Cwc_15"/>
</dbReference>
<dbReference type="PANTHER" id="PTHR12718">
    <property type="entry name" value="CELL CYCLE CONTROL PROTEIN CWF15"/>
    <property type="match status" value="1"/>
</dbReference>
<dbReference type="PANTHER" id="PTHR12718:SF2">
    <property type="entry name" value="SPLICEOSOME-ASSOCIATED PROTEIN CWC15 HOMOLOG"/>
    <property type="match status" value="1"/>
</dbReference>
<dbReference type="Pfam" id="PF04889">
    <property type="entry name" value="Cwf_Cwc_15"/>
    <property type="match status" value="1"/>
</dbReference>
<protein>
    <recommendedName>
        <fullName>Pre-mRNA-splicing factor cwc15</fullName>
    </recommendedName>
</protein>
<accession>Q5B020</accession>
<accession>C8V2J4</accession>
<keyword id="KW-0175">Coiled coil</keyword>
<keyword id="KW-0507">mRNA processing</keyword>
<keyword id="KW-0508">mRNA splicing</keyword>
<keyword id="KW-0539">Nucleus</keyword>
<keyword id="KW-1185">Reference proteome</keyword>
<keyword id="KW-0747">Spliceosome</keyword>
<reference key="1">
    <citation type="journal article" date="2005" name="Nature">
        <title>Sequencing of Aspergillus nidulans and comparative analysis with A. fumigatus and A. oryzae.</title>
        <authorList>
            <person name="Galagan J.E."/>
            <person name="Calvo S.E."/>
            <person name="Cuomo C."/>
            <person name="Ma L.-J."/>
            <person name="Wortman J.R."/>
            <person name="Batzoglou S."/>
            <person name="Lee S.-I."/>
            <person name="Bastuerkmen M."/>
            <person name="Spevak C.C."/>
            <person name="Clutterbuck J."/>
            <person name="Kapitonov V."/>
            <person name="Jurka J."/>
            <person name="Scazzocchio C."/>
            <person name="Farman M.L."/>
            <person name="Butler J."/>
            <person name="Purcell S."/>
            <person name="Harris S."/>
            <person name="Braus G.H."/>
            <person name="Draht O."/>
            <person name="Busch S."/>
            <person name="D'Enfert C."/>
            <person name="Bouchier C."/>
            <person name="Goldman G.H."/>
            <person name="Bell-Pedersen D."/>
            <person name="Griffiths-Jones S."/>
            <person name="Doonan J.H."/>
            <person name="Yu J."/>
            <person name="Vienken K."/>
            <person name="Pain A."/>
            <person name="Freitag M."/>
            <person name="Selker E.U."/>
            <person name="Archer D.B."/>
            <person name="Penalva M.A."/>
            <person name="Oakley B.R."/>
            <person name="Momany M."/>
            <person name="Tanaka T."/>
            <person name="Kumagai T."/>
            <person name="Asai K."/>
            <person name="Machida M."/>
            <person name="Nierman W.C."/>
            <person name="Denning D.W."/>
            <person name="Caddick M.X."/>
            <person name="Hynes M."/>
            <person name="Paoletti M."/>
            <person name="Fischer R."/>
            <person name="Miller B.L."/>
            <person name="Dyer P.S."/>
            <person name="Sachs M.S."/>
            <person name="Osmani S.A."/>
            <person name="Birren B.W."/>
        </authorList>
    </citation>
    <scope>NUCLEOTIDE SEQUENCE [LARGE SCALE GENOMIC DNA]</scope>
    <source>
        <strain>FGSC A4 / ATCC 38163 / CBS 112.46 / NRRL 194 / M139</strain>
    </source>
</reference>
<reference key="2">
    <citation type="journal article" date="2009" name="Fungal Genet. Biol.">
        <title>The 2008 update of the Aspergillus nidulans genome annotation: a community effort.</title>
        <authorList>
            <person name="Wortman J.R."/>
            <person name="Gilsenan J.M."/>
            <person name="Joardar V."/>
            <person name="Deegan J."/>
            <person name="Clutterbuck J."/>
            <person name="Andersen M.R."/>
            <person name="Archer D."/>
            <person name="Bencina M."/>
            <person name="Braus G."/>
            <person name="Coutinho P."/>
            <person name="von Dohren H."/>
            <person name="Doonan J."/>
            <person name="Driessen A.J."/>
            <person name="Durek P."/>
            <person name="Espeso E."/>
            <person name="Fekete E."/>
            <person name="Flipphi M."/>
            <person name="Estrada C.G."/>
            <person name="Geysens S."/>
            <person name="Goldman G."/>
            <person name="de Groot P.W."/>
            <person name="Hansen K."/>
            <person name="Harris S.D."/>
            <person name="Heinekamp T."/>
            <person name="Helmstaedt K."/>
            <person name="Henrissat B."/>
            <person name="Hofmann G."/>
            <person name="Homan T."/>
            <person name="Horio T."/>
            <person name="Horiuchi H."/>
            <person name="James S."/>
            <person name="Jones M."/>
            <person name="Karaffa L."/>
            <person name="Karanyi Z."/>
            <person name="Kato M."/>
            <person name="Keller N."/>
            <person name="Kelly D.E."/>
            <person name="Kiel J.A."/>
            <person name="Kim J.M."/>
            <person name="van der Klei I.J."/>
            <person name="Klis F.M."/>
            <person name="Kovalchuk A."/>
            <person name="Krasevec N."/>
            <person name="Kubicek C.P."/>
            <person name="Liu B."/>
            <person name="Maccabe A."/>
            <person name="Meyer V."/>
            <person name="Mirabito P."/>
            <person name="Miskei M."/>
            <person name="Mos M."/>
            <person name="Mullins J."/>
            <person name="Nelson D.R."/>
            <person name="Nielsen J."/>
            <person name="Oakley B.R."/>
            <person name="Osmani S.A."/>
            <person name="Pakula T."/>
            <person name="Paszewski A."/>
            <person name="Paulsen I."/>
            <person name="Pilsyk S."/>
            <person name="Pocsi I."/>
            <person name="Punt P.J."/>
            <person name="Ram A.F."/>
            <person name="Ren Q."/>
            <person name="Robellet X."/>
            <person name="Robson G."/>
            <person name="Seiboth B."/>
            <person name="van Solingen P."/>
            <person name="Specht T."/>
            <person name="Sun J."/>
            <person name="Taheri-Talesh N."/>
            <person name="Takeshita N."/>
            <person name="Ussery D."/>
            <person name="vanKuyk P.A."/>
            <person name="Visser H."/>
            <person name="van de Vondervoort P.J."/>
            <person name="de Vries R.P."/>
            <person name="Walton J."/>
            <person name="Xiang X."/>
            <person name="Xiong Y."/>
            <person name="Zeng A.P."/>
            <person name="Brandt B.W."/>
            <person name="Cornell M.J."/>
            <person name="van den Hondel C.A."/>
            <person name="Visser J."/>
            <person name="Oliver S.G."/>
            <person name="Turner G."/>
        </authorList>
    </citation>
    <scope>GENOME REANNOTATION</scope>
    <source>
        <strain>FGSC A4 / ATCC 38163 / CBS 112.46 / NRRL 194 / M139</strain>
    </source>
</reference>
<proteinExistence type="inferred from homology"/>